<name>PAL2_LITER</name>
<comment type="function">
    <text evidence="2">This is a key enzyme of plant metabolism catalyzing the first reaction in the biosynthesis from L-phenylalanine of a wide variety of natural products based on the phenylpropane skeleton.</text>
</comment>
<comment type="catalytic activity">
    <reaction evidence="2">
        <text>L-phenylalanine = (E)-cinnamate + NH4(+)</text>
        <dbReference type="Rhea" id="RHEA:21384"/>
        <dbReference type="ChEBI" id="CHEBI:15669"/>
        <dbReference type="ChEBI" id="CHEBI:28938"/>
        <dbReference type="ChEBI" id="CHEBI:58095"/>
        <dbReference type="EC" id="4.3.1.24"/>
    </reaction>
</comment>
<comment type="pathway">
    <text evidence="5">Phenylpropanoid metabolism; trans-cinnamate biosynthesis; trans-cinnamate from L-phenylalanine: step 1/1.</text>
</comment>
<comment type="subunit">
    <text evidence="2">Homotetramer.</text>
</comment>
<comment type="subcellular location">
    <subcellularLocation>
        <location evidence="5">Cytoplasm</location>
    </subcellularLocation>
</comment>
<comment type="tissue specificity">
    <text>Expressed mainly in roots.</text>
</comment>
<comment type="PTM">
    <text evidence="3">Contains an active site 4-methylidene-imidazol-5-one (MIO), which is formed autocatalytically by cyclization and dehydration of residues Ala-Ser-Gly.</text>
</comment>
<comment type="similarity">
    <text evidence="5">Belongs to the PAL/histidase family.</text>
</comment>
<dbReference type="EC" id="4.3.1.24" evidence="2"/>
<dbReference type="EMBL" id="D83076">
    <property type="protein sequence ID" value="BAA24929.1"/>
    <property type="molecule type" value="mRNA"/>
</dbReference>
<dbReference type="PIR" id="JC5873">
    <property type="entry name" value="JC5873"/>
</dbReference>
<dbReference type="SMR" id="O49836"/>
<dbReference type="UniPathway" id="UPA00713">
    <property type="reaction ID" value="UER00725"/>
</dbReference>
<dbReference type="GO" id="GO:0005737">
    <property type="term" value="C:cytoplasm"/>
    <property type="evidence" value="ECO:0007669"/>
    <property type="project" value="UniProtKB-SubCell"/>
</dbReference>
<dbReference type="GO" id="GO:0045548">
    <property type="term" value="F:phenylalanine ammonia-lyase activity"/>
    <property type="evidence" value="ECO:0007669"/>
    <property type="project" value="UniProtKB-EC"/>
</dbReference>
<dbReference type="GO" id="GO:0009800">
    <property type="term" value="P:cinnamic acid biosynthetic process"/>
    <property type="evidence" value="ECO:0007669"/>
    <property type="project" value="UniProtKB-UniPathway"/>
</dbReference>
<dbReference type="GO" id="GO:0006559">
    <property type="term" value="P:L-phenylalanine catabolic process"/>
    <property type="evidence" value="ECO:0007669"/>
    <property type="project" value="UniProtKB-KW"/>
</dbReference>
<dbReference type="CDD" id="cd00332">
    <property type="entry name" value="PAL-HAL"/>
    <property type="match status" value="1"/>
</dbReference>
<dbReference type="FunFam" id="1.10.274.20:FF:000001">
    <property type="entry name" value="Phenylalanine ammonia-lyase"/>
    <property type="match status" value="1"/>
</dbReference>
<dbReference type="FunFam" id="1.10.275.10:FF:000009">
    <property type="entry name" value="Phenylalanine ammonia-lyase"/>
    <property type="match status" value="1"/>
</dbReference>
<dbReference type="FunFam" id="1.20.200.10:FF:000009">
    <property type="entry name" value="Phenylalanine ammonia-lyase"/>
    <property type="match status" value="1"/>
</dbReference>
<dbReference type="Gene3D" id="1.20.200.10">
    <property type="entry name" value="Fumarase/aspartase (Central domain)"/>
    <property type="match status" value="1"/>
</dbReference>
<dbReference type="Gene3D" id="1.10.275.10">
    <property type="entry name" value="Fumarase/aspartase (N-terminal domain)"/>
    <property type="match status" value="1"/>
</dbReference>
<dbReference type="Gene3D" id="1.10.274.20">
    <property type="entry name" value="Phenylalanine ammonia-lyase 1, domain 3"/>
    <property type="match status" value="1"/>
</dbReference>
<dbReference type="InterPro" id="IPR001106">
    <property type="entry name" value="Aromatic_Lyase"/>
</dbReference>
<dbReference type="InterPro" id="IPR024083">
    <property type="entry name" value="Fumarase/histidase_N"/>
</dbReference>
<dbReference type="InterPro" id="IPR008948">
    <property type="entry name" value="L-Aspartase-like"/>
</dbReference>
<dbReference type="InterPro" id="IPR022313">
    <property type="entry name" value="Phe/His_NH3-lyase_AS"/>
</dbReference>
<dbReference type="InterPro" id="IPR005922">
    <property type="entry name" value="Phe_NH3-lyase"/>
</dbReference>
<dbReference type="InterPro" id="IPR023144">
    <property type="entry name" value="Phe_NH3-lyase_shielding_dom_sf"/>
</dbReference>
<dbReference type="NCBIfam" id="TIGR01226">
    <property type="entry name" value="phe_am_lyase"/>
    <property type="match status" value="1"/>
</dbReference>
<dbReference type="PANTHER" id="PTHR10362">
    <property type="entry name" value="HISTIDINE AMMONIA-LYASE"/>
    <property type="match status" value="1"/>
</dbReference>
<dbReference type="Pfam" id="PF00221">
    <property type="entry name" value="Lyase_aromatic"/>
    <property type="match status" value="1"/>
</dbReference>
<dbReference type="SUPFAM" id="SSF48557">
    <property type="entry name" value="L-aspartase-like"/>
    <property type="match status" value="1"/>
</dbReference>
<dbReference type="PROSITE" id="PS00488">
    <property type="entry name" value="PAL_HISTIDASE"/>
    <property type="match status" value="1"/>
</dbReference>
<proteinExistence type="evidence at transcript level"/>
<organism>
    <name type="scientific">Lithospermum erythrorhizon</name>
    <name type="common">Purple gromwell</name>
    <name type="synonym">Lithospermum officinale var. erythrorhizon</name>
    <dbReference type="NCBI Taxonomy" id="34254"/>
    <lineage>
        <taxon>Eukaryota</taxon>
        <taxon>Viridiplantae</taxon>
        <taxon>Streptophyta</taxon>
        <taxon>Embryophyta</taxon>
        <taxon>Tracheophyta</taxon>
        <taxon>Spermatophyta</taxon>
        <taxon>Magnoliopsida</taxon>
        <taxon>eudicotyledons</taxon>
        <taxon>Gunneridae</taxon>
        <taxon>Pentapetalae</taxon>
        <taxon>asterids</taxon>
        <taxon>lamiids</taxon>
        <taxon>Boraginales</taxon>
        <taxon>Boraginaceae</taxon>
        <taxon>Boraginoideae</taxon>
        <taxon>Lithospermeae</taxon>
        <taxon>Lithospermum</taxon>
    </lineage>
</organism>
<evidence type="ECO:0000250" key="1">
    <source>
        <dbReference type="UniProtKB" id="P11544"/>
    </source>
</evidence>
<evidence type="ECO:0000250" key="2">
    <source>
        <dbReference type="UniProtKB" id="P24481"/>
    </source>
</evidence>
<evidence type="ECO:0000250" key="3">
    <source>
        <dbReference type="UniProtKB" id="Q68G84"/>
    </source>
</evidence>
<evidence type="ECO:0000255" key="4">
    <source>
        <dbReference type="PROSITE-ProRule" id="PRU10122"/>
    </source>
</evidence>
<evidence type="ECO:0000305" key="5"/>
<protein>
    <recommendedName>
        <fullName>Phenylalanine ammonia-lyase 2</fullName>
        <shortName>PAL-2</shortName>
        <ecNumber evidence="2">4.3.1.24</ecNumber>
    </recommendedName>
</protein>
<accession>O49836</accession>
<keyword id="KW-0963">Cytoplasm</keyword>
<keyword id="KW-0456">Lyase</keyword>
<keyword id="KW-0585">Phenylalanine catabolism</keyword>
<keyword id="KW-0587">Phenylpropanoid metabolism</keyword>
<feature type="chain" id="PRO_0000215396" description="Phenylalanine ammonia-lyase 2">
    <location>
        <begin position="1"/>
        <end position="705"/>
    </location>
</feature>
<feature type="active site" description="Proton donor/acceptor" evidence="3">
    <location>
        <position position="97"/>
    </location>
</feature>
<feature type="binding site" evidence="3">
    <location>
        <position position="249"/>
    </location>
    <ligand>
        <name>(E)-cinnamate</name>
        <dbReference type="ChEBI" id="CHEBI:15669"/>
    </ligand>
</feature>
<feature type="binding site" evidence="3">
    <location>
        <position position="337"/>
    </location>
    <ligand>
        <name>(E)-cinnamate</name>
        <dbReference type="ChEBI" id="CHEBI:15669"/>
    </ligand>
</feature>
<feature type="binding site" evidence="3">
    <location>
        <position position="343"/>
    </location>
    <ligand>
        <name>(E)-cinnamate</name>
        <dbReference type="ChEBI" id="CHEBI:15669"/>
    </ligand>
</feature>
<feature type="binding site" evidence="3">
    <location>
        <position position="373"/>
    </location>
    <ligand>
        <name>(E)-cinnamate</name>
        <dbReference type="ChEBI" id="CHEBI:15669"/>
    </ligand>
</feature>
<feature type="binding site" evidence="1">
    <location>
        <position position="445"/>
    </location>
    <ligand>
        <name>(E)-cinnamate</name>
        <dbReference type="ChEBI" id="CHEBI:15669"/>
    </ligand>
</feature>
<feature type="binding site" evidence="1">
    <location>
        <position position="473"/>
    </location>
    <ligand>
        <name>(E)-cinnamate</name>
        <dbReference type="ChEBI" id="CHEBI:15669"/>
    </ligand>
</feature>
<feature type="binding site" evidence="3">
    <location>
        <position position="476"/>
    </location>
    <ligand>
        <name>(E)-cinnamate</name>
        <dbReference type="ChEBI" id="CHEBI:15669"/>
    </ligand>
</feature>
<feature type="modified residue" description="2,3-didehydroalanine (Ser)" evidence="4">
    <location>
        <position position="192"/>
    </location>
</feature>
<feature type="cross-link" description="5-imidazolinone (Ala-Gly)" evidence="3">
    <location>
        <begin position="191"/>
        <end position="193"/>
    </location>
</feature>
<sequence length="705" mass="76510">MENGNGKMEFCMKDPLNWGMAAESMKGSHLDEVKKMVAEFRKPVVQLAGKTLTIAQVAAIAARDDGVTVELAEAAREGVKASSDWVMESMNKGTDSYGVTTGFGATSHRRTKQGGALQKELIRFLNAGIFGNGTETSHTLPHSATRAAMLVRINTLLQGYSGIRFEILEAITKFLNTNITPCLPLRGTITASGDLVPLSYIAGLLTGRPNSKAVGPTGEKLNAEEAFRLAGISSGFFELQPKEGLALVNGTAVGSGMASMVLYEANILGVMSEVLSAVFAEVMNGKPEFTDHLTHKLKHHPGQIEAAAIMEHILDGSGYVKAAELLHEMDPLQKPKQDRYALRTSPQWLGPQIEVIRSATKMIEREINSVNDNPLIDVSRNKALHGGNFQGTPIGVAMDNTRLAIAAIGKLLFAQFSELVNDYYNNGLPSNLTGSRDPSLDYGFKGAEIAMASYCSELQFLANPVTNHVQSAEQHNQDVNSLGLISSRKTSEAVEILKLMSSSFLVALCQAVDLRHIEENVRLAVKKTVSQVAKKTLNIGVDGVLHPSRFSEKELLRVVDREYVFAYADDPCSATYPLMQKLREVLVSHALANSGNEKDASTSIFHKIGVFEEELKGILPKEVENARASVENGTPAIPNKIEECRSYPLYKFVRGELGTELLTGEKVRSPGEELDQVFNALCEGKLVDPLLACLEAWNGAPLPIC</sequence>
<reference key="1">
    <citation type="journal article" date="1997" name="Biosci. Biotechnol. Biochem.">
        <title>cDNA cloning and gene expression of phenylalanine ammonia-lyase in Lithospermum erythrorhizon.</title>
        <authorList>
            <person name="Yazaki K."/>
            <person name="Kataoka M."/>
            <person name="Honda G."/>
            <person name="Severin K."/>
            <person name="Heide L."/>
        </authorList>
    </citation>
    <scope>NUCLEOTIDE SEQUENCE [MRNA]</scope>
</reference>